<evidence type="ECO:0000255" key="1">
    <source>
        <dbReference type="HAMAP-Rule" id="MF_00041"/>
    </source>
</evidence>
<keyword id="KW-0030">Aminoacyl-tRNA synthetase</keyword>
<keyword id="KW-0067">ATP-binding</keyword>
<keyword id="KW-0963">Cytoplasm</keyword>
<keyword id="KW-0436">Ligase</keyword>
<keyword id="KW-0479">Metal-binding</keyword>
<keyword id="KW-0547">Nucleotide-binding</keyword>
<keyword id="KW-0648">Protein biosynthesis</keyword>
<keyword id="KW-0862">Zinc</keyword>
<reference key="1">
    <citation type="journal article" date="2006" name="Proc. Natl. Acad. Sci. U.S.A.">
        <title>Comparative genomics of the lactic acid bacteria.</title>
        <authorList>
            <person name="Makarova K.S."/>
            <person name="Slesarev A."/>
            <person name="Wolf Y.I."/>
            <person name="Sorokin A."/>
            <person name="Mirkin B."/>
            <person name="Koonin E.V."/>
            <person name="Pavlov A."/>
            <person name="Pavlova N."/>
            <person name="Karamychev V."/>
            <person name="Polouchine N."/>
            <person name="Shakhova V."/>
            <person name="Grigoriev I."/>
            <person name="Lou Y."/>
            <person name="Rohksar D."/>
            <person name="Lucas S."/>
            <person name="Huang K."/>
            <person name="Goodstein D.M."/>
            <person name="Hawkins T."/>
            <person name="Plengvidhya V."/>
            <person name="Welker D."/>
            <person name="Hughes J."/>
            <person name="Goh Y."/>
            <person name="Benson A."/>
            <person name="Baldwin K."/>
            <person name="Lee J.-H."/>
            <person name="Diaz-Muniz I."/>
            <person name="Dosti B."/>
            <person name="Smeianov V."/>
            <person name="Wechter W."/>
            <person name="Barabote R."/>
            <person name="Lorca G."/>
            <person name="Altermann E."/>
            <person name="Barrangou R."/>
            <person name="Ganesan B."/>
            <person name="Xie Y."/>
            <person name="Rawsthorne H."/>
            <person name="Tamir D."/>
            <person name="Parker C."/>
            <person name="Breidt F."/>
            <person name="Broadbent J.R."/>
            <person name="Hutkins R."/>
            <person name="O'Sullivan D."/>
            <person name="Steele J."/>
            <person name="Unlu G."/>
            <person name="Saier M.H. Jr."/>
            <person name="Klaenhammer T."/>
            <person name="Richardson P."/>
            <person name="Kozyavkin S."/>
            <person name="Weimer B.C."/>
            <person name="Mills D.A."/>
        </authorList>
    </citation>
    <scope>NUCLEOTIDE SEQUENCE [LARGE SCALE GENOMIC DNA]</scope>
    <source>
        <strain>ATCC 25745 / CCUG 21536 / LMG 10740 / 183-1w</strain>
    </source>
</reference>
<accession>Q03E41</accession>
<name>SYC_PEDPA</name>
<protein>
    <recommendedName>
        <fullName evidence="1">Cysteine--tRNA ligase</fullName>
        <ecNumber evidence="1">6.1.1.16</ecNumber>
    </recommendedName>
    <alternativeName>
        <fullName evidence="1">Cysteinyl-tRNA synthetase</fullName>
        <shortName evidence="1">CysRS</shortName>
    </alternativeName>
</protein>
<dbReference type="EC" id="6.1.1.16" evidence="1"/>
<dbReference type="EMBL" id="CP000422">
    <property type="protein sequence ID" value="ABJ68531.1"/>
    <property type="molecule type" value="Genomic_DNA"/>
</dbReference>
<dbReference type="RefSeq" id="WP_011673700.1">
    <property type="nucleotide sequence ID" value="NC_008525.1"/>
</dbReference>
<dbReference type="SMR" id="Q03E41"/>
<dbReference type="STRING" id="278197.PEPE_1500"/>
<dbReference type="GeneID" id="33062565"/>
<dbReference type="KEGG" id="ppe:PEPE_1500"/>
<dbReference type="eggNOG" id="COG0215">
    <property type="taxonomic scope" value="Bacteria"/>
</dbReference>
<dbReference type="HOGENOM" id="CLU_013528_0_1_9"/>
<dbReference type="OrthoDB" id="9815130at2"/>
<dbReference type="Proteomes" id="UP000000773">
    <property type="component" value="Chromosome"/>
</dbReference>
<dbReference type="GO" id="GO:0005829">
    <property type="term" value="C:cytosol"/>
    <property type="evidence" value="ECO:0007669"/>
    <property type="project" value="TreeGrafter"/>
</dbReference>
<dbReference type="GO" id="GO:0005524">
    <property type="term" value="F:ATP binding"/>
    <property type="evidence" value="ECO:0007669"/>
    <property type="project" value="UniProtKB-UniRule"/>
</dbReference>
<dbReference type="GO" id="GO:0004817">
    <property type="term" value="F:cysteine-tRNA ligase activity"/>
    <property type="evidence" value="ECO:0007669"/>
    <property type="project" value="UniProtKB-UniRule"/>
</dbReference>
<dbReference type="GO" id="GO:0008270">
    <property type="term" value="F:zinc ion binding"/>
    <property type="evidence" value="ECO:0007669"/>
    <property type="project" value="UniProtKB-UniRule"/>
</dbReference>
<dbReference type="GO" id="GO:0006423">
    <property type="term" value="P:cysteinyl-tRNA aminoacylation"/>
    <property type="evidence" value="ECO:0007669"/>
    <property type="project" value="UniProtKB-UniRule"/>
</dbReference>
<dbReference type="CDD" id="cd00672">
    <property type="entry name" value="CysRS_core"/>
    <property type="match status" value="1"/>
</dbReference>
<dbReference type="FunFam" id="3.40.50.620:FF:000009">
    <property type="entry name" value="Cysteine--tRNA ligase"/>
    <property type="match status" value="1"/>
</dbReference>
<dbReference type="Gene3D" id="1.20.120.1910">
    <property type="entry name" value="Cysteine-tRNA ligase, C-terminal anti-codon recognition domain"/>
    <property type="match status" value="1"/>
</dbReference>
<dbReference type="Gene3D" id="3.40.50.620">
    <property type="entry name" value="HUPs"/>
    <property type="match status" value="1"/>
</dbReference>
<dbReference type="HAMAP" id="MF_00041">
    <property type="entry name" value="Cys_tRNA_synth"/>
    <property type="match status" value="1"/>
</dbReference>
<dbReference type="InterPro" id="IPR015803">
    <property type="entry name" value="Cys-tRNA-ligase"/>
</dbReference>
<dbReference type="InterPro" id="IPR015273">
    <property type="entry name" value="Cys-tRNA-synt_Ia_DALR"/>
</dbReference>
<dbReference type="InterPro" id="IPR024909">
    <property type="entry name" value="Cys-tRNA/MSH_ligase"/>
</dbReference>
<dbReference type="InterPro" id="IPR056411">
    <property type="entry name" value="CysS_C"/>
</dbReference>
<dbReference type="InterPro" id="IPR014729">
    <property type="entry name" value="Rossmann-like_a/b/a_fold"/>
</dbReference>
<dbReference type="InterPro" id="IPR032678">
    <property type="entry name" value="tRNA-synt_1_cat_dom"/>
</dbReference>
<dbReference type="InterPro" id="IPR009080">
    <property type="entry name" value="tRNAsynth_Ia_anticodon-bd"/>
</dbReference>
<dbReference type="NCBIfam" id="TIGR00435">
    <property type="entry name" value="cysS"/>
    <property type="match status" value="1"/>
</dbReference>
<dbReference type="PANTHER" id="PTHR10890:SF3">
    <property type="entry name" value="CYSTEINE--TRNA LIGASE, CYTOPLASMIC"/>
    <property type="match status" value="1"/>
</dbReference>
<dbReference type="PANTHER" id="PTHR10890">
    <property type="entry name" value="CYSTEINYL-TRNA SYNTHETASE"/>
    <property type="match status" value="1"/>
</dbReference>
<dbReference type="Pfam" id="PF23493">
    <property type="entry name" value="CysS_C"/>
    <property type="match status" value="1"/>
</dbReference>
<dbReference type="Pfam" id="PF09190">
    <property type="entry name" value="DALR_2"/>
    <property type="match status" value="1"/>
</dbReference>
<dbReference type="Pfam" id="PF01406">
    <property type="entry name" value="tRNA-synt_1e"/>
    <property type="match status" value="1"/>
</dbReference>
<dbReference type="PRINTS" id="PR00983">
    <property type="entry name" value="TRNASYNTHCYS"/>
</dbReference>
<dbReference type="SMART" id="SM00840">
    <property type="entry name" value="DALR_2"/>
    <property type="match status" value="1"/>
</dbReference>
<dbReference type="SUPFAM" id="SSF47323">
    <property type="entry name" value="Anticodon-binding domain of a subclass of class I aminoacyl-tRNA synthetases"/>
    <property type="match status" value="1"/>
</dbReference>
<dbReference type="SUPFAM" id="SSF52374">
    <property type="entry name" value="Nucleotidylyl transferase"/>
    <property type="match status" value="1"/>
</dbReference>
<proteinExistence type="inferred from homology"/>
<feature type="chain" id="PRO_1000074622" description="Cysteine--tRNA ligase">
    <location>
        <begin position="1"/>
        <end position="470"/>
    </location>
</feature>
<feature type="short sequence motif" description="'HIGH' region">
    <location>
        <begin position="30"/>
        <end position="40"/>
    </location>
</feature>
<feature type="short sequence motif" description="'KMSKS' region">
    <location>
        <begin position="271"/>
        <end position="275"/>
    </location>
</feature>
<feature type="binding site" evidence="1">
    <location>
        <position position="28"/>
    </location>
    <ligand>
        <name>Zn(2+)</name>
        <dbReference type="ChEBI" id="CHEBI:29105"/>
    </ligand>
</feature>
<feature type="binding site" evidence="1">
    <location>
        <position position="212"/>
    </location>
    <ligand>
        <name>Zn(2+)</name>
        <dbReference type="ChEBI" id="CHEBI:29105"/>
    </ligand>
</feature>
<feature type="binding site" evidence="1">
    <location>
        <position position="237"/>
    </location>
    <ligand>
        <name>Zn(2+)</name>
        <dbReference type="ChEBI" id="CHEBI:29105"/>
    </ligand>
</feature>
<feature type="binding site" evidence="1">
    <location>
        <position position="241"/>
    </location>
    <ligand>
        <name>Zn(2+)</name>
        <dbReference type="ChEBI" id="CHEBI:29105"/>
    </ligand>
</feature>
<feature type="binding site" evidence="1">
    <location>
        <position position="274"/>
    </location>
    <ligand>
        <name>ATP</name>
        <dbReference type="ChEBI" id="CHEBI:30616"/>
    </ligand>
</feature>
<comment type="catalytic activity">
    <reaction evidence="1">
        <text>tRNA(Cys) + L-cysteine + ATP = L-cysteinyl-tRNA(Cys) + AMP + diphosphate</text>
        <dbReference type="Rhea" id="RHEA:17773"/>
        <dbReference type="Rhea" id="RHEA-COMP:9661"/>
        <dbReference type="Rhea" id="RHEA-COMP:9679"/>
        <dbReference type="ChEBI" id="CHEBI:30616"/>
        <dbReference type="ChEBI" id="CHEBI:33019"/>
        <dbReference type="ChEBI" id="CHEBI:35235"/>
        <dbReference type="ChEBI" id="CHEBI:78442"/>
        <dbReference type="ChEBI" id="CHEBI:78517"/>
        <dbReference type="ChEBI" id="CHEBI:456215"/>
        <dbReference type="EC" id="6.1.1.16"/>
    </reaction>
</comment>
<comment type="cofactor">
    <cofactor evidence="1">
        <name>Zn(2+)</name>
        <dbReference type="ChEBI" id="CHEBI:29105"/>
    </cofactor>
    <text evidence="1">Binds 1 zinc ion per subunit.</text>
</comment>
<comment type="subunit">
    <text evidence="1">Monomer.</text>
</comment>
<comment type="subcellular location">
    <subcellularLocation>
        <location evidence="1">Cytoplasm</location>
    </subcellularLocation>
</comment>
<comment type="similarity">
    <text evidence="1">Belongs to the class-I aminoacyl-tRNA synthetase family.</text>
</comment>
<sequence>MIKIYNTMSRTKETFKPLVDHKVSMYVCGPTVYNYIHIGNARSIIAFDTIRRYFEYRGFEVKFVSNFTDVDDKMINSAREQGITVPELADRYIGAFKEDVQAVNVEPATLNPRATENIDDIIAFIADLMDKGFAYAVDGDVYYRARKFSKYGALSHQNIDELEQGASQHVDDEETARKEDPIDFALWKAAKGDEIAWKAPWGTGRPGWHIECSVMSTKYLGDTFDIHGGGEDLQFPHHENEIAQSEAKTGKQFARYWMHNGFVTVGDDNEKMSKSLGNFVTVHDLVQKINPQVLRFLMSTTQYRRPIQYTQASLQDAKNNLEKLQNAFINLNYRLQGAQGAADATVAEQAAQLETDFITAMDDDFNAQNGITVVYEFARLINVYSEKTAVNAEQINQLLTSYAKMAAVFGIELKQIENDDAEIDELVKQRDQARADRDFETSDRLRNQLKEMGVILEDTPQGTRWRKKDE</sequence>
<gene>
    <name evidence="1" type="primary">cysS</name>
    <name type="ordered locus">PEPE_1500</name>
</gene>
<organism>
    <name type="scientific">Pediococcus pentosaceus (strain ATCC 25745 / CCUG 21536 / LMG 10740 / 183-1w)</name>
    <dbReference type="NCBI Taxonomy" id="278197"/>
    <lineage>
        <taxon>Bacteria</taxon>
        <taxon>Bacillati</taxon>
        <taxon>Bacillota</taxon>
        <taxon>Bacilli</taxon>
        <taxon>Lactobacillales</taxon>
        <taxon>Lactobacillaceae</taxon>
        <taxon>Pediococcus</taxon>
    </lineage>
</organism>